<reference key="1">
    <citation type="submission" date="1995-12" db="EMBL/GenBank/DDBJ databases">
        <authorList>
            <person name="Chu R.C."/>
            <person name="Yang C.-C."/>
        </authorList>
    </citation>
    <scope>NUCLEOTIDE SEQUENCE [MRNA]</scope>
    <source>
        <tissue>Venom gland</tissue>
    </source>
</reference>
<evidence type="ECO:0000250" key="1"/>
<evidence type="ECO:0000250" key="2">
    <source>
        <dbReference type="UniProtKB" id="P60301"/>
    </source>
</evidence>
<evidence type="ECO:0000250" key="3">
    <source>
        <dbReference type="UniProtKB" id="P60304"/>
    </source>
</evidence>
<evidence type="ECO:0000305" key="4"/>
<feature type="signal peptide" evidence="1">
    <location>
        <begin position="1"/>
        <end position="21"/>
    </location>
</feature>
<feature type="chain" id="PRO_0000035386" description="Cytotoxin 8">
    <location>
        <begin position="22"/>
        <end position="81"/>
    </location>
</feature>
<feature type="disulfide bond" evidence="2">
    <location>
        <begin position="24"/>
        <end position="42"/>
    </location>
</feature>
<feature type="disulfide bond" evidence="2">
    <location>
        <begin position="35"/>
        <end position="59"/>
    </location>
</feature>
<feature type="disulfide bond" evidence="2">
    <location>
        <begin position="63"/>
        <end position="74"/>
    </location>
</feature>
<feature type="disulfide bond" evidence="2">
    <location>
        <begin position="75"/>
        <end position="80"/>
    </location>
</feature>
<comment type="function">
    <text evidence="2 3">Shows cytolytic activity on many different cells by forming pore in lipid membranes. In vivo, increases heart rate or kills the animal by cardiac arrest. In addition, it binds to heparin with high affinity, interacts with Kv channel-interacting protein 1 (KCNIP1) in a calcium-independent manner, and binds to integrin alpha-V/beta-3 (ITGAV/ITGB3) with moderate affinity.</text>
</comment>
<comment type="subunit">
    <text evidence="2">Monomer in solution; Homodimer and oligomer in the presence of negatively charged lipids forming a pore with a size ranging between 20 and 30 Angstroms.</text>
</comment>
<comment type="subcellular location">
    <subcellularLocation>
        <location evidence="1">Secreted</location>
    </subcellularLocation>
    <subcellularLocation>
        <location evidence="2">Target cell membrane</location>
    </subcellularLocation>
</comment>
<comment type="tissue specificity">
    <text evidence="4">Expressed by the venom gland.</text>
</comment>
<comment type="miscellaneous">
    <text evidence="4">Is classified as a P-type cytotoxin, since a proline residue stands at position 51 (Pro-31 in standard classification).</text>
</comment>
<comment type="similarity">
    <text evidence="4">Belongs to the three-finger toxin family. Short-chain subfamily. Type IA cytotoxin sub-subfamily.</text>
</comment>
<proteinExistence type="inferred from homology"/>
<protein>
    <recommendedName>
        <fullName>Cytotoxin 8</fullName>
    </recommendedName>
    <alternativeName>
        <fullName>Cardiotoxin VIII</fullName>
    </alternativeName>
    <alternativeName>
        <fullName>Cardiotoxin-8</fullName>
        <shortName>CTX8</shortName>
    </alternativeName>
</protein>
<organism>
    <name type="scientific">Naja atra</name>
    <name type="common">Chinese cobra</name>
    <dbReference type="NCBI Taxonomy" id="8656"/>
    <lineage>
        <taxon>Eukaryota</taxon>
        <taxon>Metazoa</taxon>
        <taxon>Chordata</taxon>
        <taxon>Craniata</taxon>
        <taxon>Vertebrata</taxon>
        <taxon>Euteleostomi</taxon>
        <taxon>Lepidosauria</taxon>
        <taxon>Squamata</taxon>
        <taxon>Bifurcata</taxon>
        <taxon>Unidentata</taxon>
        <taxon>Episquamata</taxon>
        <taxon>Toxicofera</taxon>
        <taxon>Serpentes</taxon>
        <taxon>Colubroidea</taxon>
        <taxon>Elapidae</taxon>
        <taxon>Elapinae</taxon>
        <taxon>Naja</taxon>
    </lineage>
</organism>
<name>3SA8B_NAJAT</name>
<accession>Q91124</accession>
<keyword id="KW-0123">Cardiotoxin</keyword>
<keyword id="KW-0204">Cytolysis</keyword>
<keyword id="KW-1015">Disulfide bond</keyword>
<keyword id="KW-0472">Membrane</keyword>
<keyword id="KW-0964">Secreted</keyword>
<keyword id="KW-0732">Signal</keyword>
<keyword id="KW-1052">Target cell membrane</keyword>
<keyword id="KW-1053">Target membrane</keyword>
<keyword id="KW-0800">Toxin</keyword>
<sequence>MKTLLLTLVVVTIVCLDLGYTLKCNKLIPIASKTCPAGKNLCYKMFMVATPKVPVKRGCIDVCPKSSLLVKYVCCNTDRCN</sequence>
<dbReference type="EMBL" id="U42586">
    <property type="protein sequence ID" value="AAB01542.1"/>
    <property type="molecule type" value="mRNA"/>
</dbReference>
<dbReference type="SMR" id="Q91124"/>
<dbReference type="GO" id="GO:0005576">
    <property type="term" value="C:extracellular region"/>
    <property type="evidence" value="ECO:0007669"/>
    <property type="project" value="UniProtKB-SubCell"/>
</dbReference>
<dbReference type="GO" id="GO:0016020">
    <property type="term" value="C:membrane"/>
    <property type="evidence" value="ECO:0007669"/>
    <property type="project" value="UniProtKB-KW"/>
</dbReference>
<dbReference type="GO" id="GO:0044218">
    <property type="term" value="C:other organism cell membrane"/>
    <property type="evidence" value="ECO:0007669"/>
    <property type="project" value="UniProtKB-KW"/>
</dbReference>
<dbReference type="GO" id="GO:0090729">
    <property type="term" value="F:toxin activity"/>
    <property type="evidence" value="ECO:0007669"/>
    <property type="project" value="UniProtKB-KW"/>
</dbReference>
<dbReference type="GO" id="GO:0031640">
    <property type="term" value="P:killing of cells of another organism"/>
    <property type="evidence" value="ECO:0007669"/>
    <property type="project" value="UniProtKB-KW"/>
</dbReference>
<dbReference type="CDD" id="cd00206">
    <property type="entry name" value="TFP_snake_toxin"/>
    <property type="match status" value="1"/>
</dbReference>
<dbReference type="FunFam" id="2.10.60.10:FF:000024">
    <property type="entry name" value="Cytotoxin 1"/>
    <property type="match status" value="1"/>
</dbReference>
<dbReference type="Gene3D" id="2.10.60.10">
    <property type="entry name" value="CD59"/>
    <property type="match status" value="1"/>
</dbReference>
<dbReference type="InterPro" id="IPR003572">
    <property type="entry name" value="Cytotoxin_Cobra"/>
</dbReference>
<dbReference type="InterPro" id="IPR003571">
    <property type="entry name" value="Snake_3FTx"/>
</dbReference>
<dbReference type="InterPro" id="IPR045860">
    <property type="entry name" value="Snake_toxin-like_sf"/>
</dbReference>
<dbReference type="InterPro" id="IPR018354">
    <property type="entry name" value="Snake_toxin_con_site"/>
</dbReference>
<dbReference type="InterPro" id="IPR054131">
    <property type="entry name" value="Toxin_cobra-type"/>
</dbReference>
<dbReference type="Pfam" id="PF21947">
    <property type="entry name" value="Toxin_cobra-type"/>
    <property type="match status" value="1"/>
</dbReference>
<dbReference type="PRINTS" id="PR00282">
    <property type="entry name" value="CYTOTOXIN"/>
</dbReference>
<dbReference type="SUPFAM" id="SSF57302">
    <property type="entry name" value="Snake toxin-like"/>
    <property type="match status" value="1"/>
</dbReference>
<dbReference type="PROSITE" id="PS00272">
    <property type="entry name" value="SNAKE_TOXIN"/>
    <property type="match status" value="1"/>
</dbReference>